<organism>
    <name type="scientific">Clostridium perfringens (strain ATCC 13124 / DSM 756 / JCM 1290 / NCIMB 6125 / NCTC 8237 / Type A)</name>
    <dbReference type="NCBI Taxonomy" id="195103"/>
    <lineage>
        <taxon>Bacteria</taxon>
        <taxon>Bacillati</taxon>
        <taxon>Bacillota</taxon>
        <taxon>Clostridia</taxon>
        <taxon>Eubacteriales</taxon>
        <taxon>Clostridiaceae</taxon>
        <taxon>Clostridium</taxon>
    </lineage>
</organism>
<protein>
    <recommendedName>
        <fullName evidence="1">Large ribosomal subunit protein bL25</fullName>
    </recommendedName>
    <alternativeName>
        <fullName evidence="2">50S ribosomal protein L25</fullName>
    </alternativeName>
    <alternativeName>
        <fullName evidence="1">General stress protein CTC</fullName>
    </alternativeName>
</protein>
<dbReference type="EMBL" id="CP000246">
    <property type="protein sequence ID" value="ABG84454.1"/>
    <property type="molecule type" value="Genomic_DNA"/>
</dbReference>
<dbReference type="SMR" id="Q0TP84"/>
<dbReference type="STRING" id="195103.CPF_2128"/>
<dbReference type="PaxDb" id="195103-CPF_2128"/>
<dbReference type="KEGG" id="cpf:CPF_2128"/>
<dbReference type="eggNOG" id="COG1825">
    <property type="taxonomic scope" value="Bacteria"/>
</dbReference>
<dbReference type="HOGENOM" id="CLU_075939_2_2_9"/>
<dbReference type="Proteomes" id="UP000001823">
    <property type="component" value="Chromosome"/>
</dbReference>
<dbReference type="GO" id="GO:0022625">
    <property type="term" value="C:cytosolic large ribosomal subunit"/>
    <property type="evidence" value="ECO:0007669"/>
    <property type="project" value="TreeGrafter"/>
</dbReference>
<dbReference type="GO" id="GO:0008097">
    <property type="term" value="F:5S rRNA binding"/>
    <property type="evidence" value="ECO:0007669"/>
    <property type="project" value="InterPro"/>
</dbReference>
<dbReference type="GO" id="GO:0003735">
    <property type="term" value="F:structural constituent of ribosome"/>
    <property type="evidence" value="ECO:0007669"/>
    <property type="project" value="InterPro"/>
</dbReference>
<dbReference type="GO" id="GO:0006412">
    <property type="term" value="P:translation"/>
    <property type="evidence" value="ECO:0007669"/>
    <property type="project" value="UniProtKB-UniRule"/>
</dbReference>
<dbReference type="CDD" id="cd00495">
    <property type="entry name" value="Ribosomal_L25_TL5_CTC"/>
    <property type="match status" value="1"/>
</dbReference>
<dbReference type="Gene3D" id="2.170.120.20">
    <property type="entry name" value="Ribosomal protein L25, beta domain"/>
    <property type="match status" value="1"/>
</dbReference>
<dbReference type="Gene3D" id="2.40.240.10">
    <property type="entry name" value="Ribosomal Protein L25, Chain P"/>
    <property type="match status" value="1"/>
</dbReference>
<dbReference type="HAMAP" id="MF_01334">
    <property type="entry name" value="Ribosomal_bL25_CTC"/>
    <property type="match status" value="1"/>
</dbReference>
<dbReference type="InterPro" id="IPR020056">
    <property type="entry name" value="Rbsml_bL25/Gln-tRNA_synth_N"/>
</dbReference>
<dbReference type="InterPro" id="IPR011035">
    <property type="entry name" value="Ribosomal_bL25/Gln-tRNA_synth"/>
</dbReference>
<dbReference type="InterPro" id="IPR020057">
    <property type="entry name" value="Ribosomal_bL25_b-dom"/>
</dbReference>
<dbReference type="InterPro" id="IPR037121">
    <property type="entry name" value="Ribosomal_bL25_C"/>
</dbReference>
<dbReference type="InterPro" id="IPR001021">
    <property type="entry name" value="Ribosomal_bL25_long"/>
</dbReference>
<dbReference type="InterPro" id="IPR029751">
    <property type="entry name" value="Ribosomal_L25_dom"/>
</dbReference>
<dbReference type="InterPro" id="IPR020930">
    <property type="entry name" value="Ribosomal_uL5_bac-type"/>
</dbReference>
<dbReference type="NCBIfam" id="TIGR00731">
    <property type="entry name" value="bL25_bact_ctc"/>
    <property type="match status" value="1"/>
</dbReference>
<dbReference type="PANTHER" id="PTHR33284">
    <property type="entry name" value="RIBOSOMAL PROTEIN L25/GLN-TRNA SYNTHETASE, ANTI-CODON-BINDING DOMAIN-CONTAINING PROTEIN"/>
    <property type="match status" value="1"/>
</dbReference>
<dbReference type="PANTHER" id="PTHR33284:SF1">
    <property type="entry name" value="RIBOSOMAL PROTEIN L25_GLN-TRNA SYNTHETASE, ANTI-CODON-BINDING DOMAIN-CONTAINING PROTEIN"/>
    <property type="match status" value="1"/>
</dbReference>
<dbReference type="Pfam" id="PF01386">
    <property type="entry name" value="Ribosomal_L25p"/>
    <property type="match status" value="1"/>
</dbReference>
<dbReference type="Pfam" id="PF14693">
    <property type="entry name" value="Ribosomal_TL5_C"/>
    <property type="match status" value="1"/>
</dbReference>
<dbReference type="SUPFAM" id="SSF50715">
    <property type="entry name" value="Ribosomal protein L25-like"/>
    <property type="match status" value="1"/>
</dbReference>
<evidence type="ECO:0000255" key="1">
    <source>
        <dbReference type="HAMAP-Rule" id="MF_01334"/>
    </source>
</evidence>
<evidence type="ECO:0000305" key="2"/>
<comment type="function">
    <text evidence="1">This is one of the proteins that binds to the 5S RNA in the ribosome where it forms part of the central protuberance.</text>
</comment>
<comment type="subunit">
    <text evidence="1">Part of the 50S ribosomal subunit; part of the 5S rRNA/L5/L18/L25 subcomplex. Contacts the 5S rRNA. Binds to the 5S rRNA independently of L5 and L18.</text>
</comment>
<comment type="similarity">
    <text evidence="1">Belongs to the bacterial ribosomal protein bL25 family. CTC subfamily.</text>
</comment>
<keyword id="KW-0687">Ribonucleoprotein</keyword>
<keyword id="KW-0689">Ribosomal protein</keyword>
<keyword id="KW-0694">RNA-binding</keyword>
<keyword id="KW-0699">rRNA-binding</keyword>
<reference key="1">
    <citation type="journal article" date="2006" name="Genome Res.">
        <title>Skewed genomic variability in strains of the toxigenic bacterial pathogen, Clostridium perfringens.</title>
        <authorList>
            <person name="Myers G.S.A."/>
            <person name="Rasko D.A."/>
            <person name="Cheung J.K."/>
            <person name="Ravel J."/>
            <person name="Seshadri R."/>
            <person name="DeBoy R.T."/>
            <person name="Ren Q."/>
            <person name="Varga J."/>
            <person name="Awad M.M."/>
            <person name="Brinkac L.M."/>
            <person name="Daugherty S.C."/>
            <person name="Haft D.H."/>
            <person name="Dodson R.J."/>
            <person name="Madupu R."/>
            <person name="Nelson W.C."/>
            <person name="Rosovitz M.J."/>
            <person name="Sullivan S.A."/>
            <person name="Khouri H."/>
            <person name="Dimitrov G.I."/>
            <person name="Watkins K.L."/>
            <person name="Mulligan S."/>
            <person name="Benton J."/>
            <person name="Radune D."/>
            <person name="Fisher D.J."/>
            <person name="Atkins H.S."/>
            <person name="Hiscox T."/>
            <person name="Jost B.H."/>
            <person name="Billington S.J."/>
            <person name="Songer J.G."/>
            <person name="McClane B.A."/>
            <person name="Titball R.W."/>
            <person name="Rood J.I."/>
            <person name="Melville S.B."/>
            <person name="Paulsen I.T."/>
        </authorList>
    </citation>
    <scope>NUCLEOTIDE SEQUENCE [LARGE SCALE GENOMIC DNA]</scope>
    <source>
        <strain>ATCC 13124 / DSM 756 / JCM 1290 / NCIMB 6125 / NCTC 8237 / S 107 / Type A</strain>
    </source>
</reference>
<name>RL25_CLOP1</name>
<sequence>MENLQVNQREKKTRHSSRQCRRKGLVPGVIYGKGINNFLFEIGELELNHALSVTGEHGLLSINSQEGSLNTLIKEVQRDPVTRRVLHIDLEKVEGNEEIETAVPINYVGEEYINKLDAVLQKNLDSIKVKCSPSNIPKGVNLNVGRAKPGDQFKIADVEFGNEITVVDDLNSIVASVSYDQKIITQEVVDQEVAENRAKKES</sequence>
<proteinExistence type="inferred from homology"/>
<feature type="chain" id="PRO_1000142507" description="Large ribosomal subunit protein bL25">
    <location>
        <begin position="1"/>
        <end position="202"/>
    </location>
</feature>
<gene>
    <name evidence="1" type="primary">rplY</name>
    <name evidence="1" type="synonym">ctc</name>
    <name type="ordered locus">CPF_2128</name>
</gene>
<accession>Q0TP84</accession>